<gene>
    <name type="primary">UBP8</name>
    <name type="ordered locus">At5g22030</name>
    <name type="ORF">T6G21.4</name>
</gene>
<proteinExistence type="evidence at transcript level"/>
<comment type="function">
    <text evidence="1">Recognizes and hydrolyzes the peptide bond at the C-terminal Gly of ubiquitin. Involved in the processing of poly-ubiquitin precursors as well as that of ubiquitinated proteins (By similarity).</text>
</comment>
<comment type="catalytic activity">
    <reaction>
        <text>Thiol-dependent hydrolysis of ester, thioester, amide, peptide and isopeptide bonds formed by the C-terminal Gly of ubiquitin (a 76-residue protein attached to proteins as an intracellular targeting signal).</text>
        <dbReference type="EC" id="3.4.19.12"/>
    </reaction>
</comment>
<comment type="similarity">
    <text evidence="5">Belongs to the peptidase C19 family.</text>
</comment>
<comment type="sequence caution" evidence="5">
    <conflict type="erroneous gene model prediction">
        <sequence resource="EMBL-CDS" id="AED92970"/>
    </conflict>
</comment>
<comment type="sequence caution" evidence="5">
    <conflict type="miscellaneous discrepancy">
        <sequence resource="EMBL-CDS" id="BAE98798"/>
    </conflict>
    <text>Probable cloning artifact leading to an insertion into the sequence.</text>
</comment>
<comment type="sequence caution" evidence="5">
    <conflict type="erroneous gene model prediction">
        <sequence resource="EMBL-CDS" id="CAC34496"/>
    </conflict>
</comment>
<protein>
    <recommendedName>
        <fullName>Ubiquitin carboxyl-terminal hydrolase 8</fullName>
        <ecNumber>3.4.19.12</ecNumber>
    </recommendedName>
    <alternativeName>
        <fullName>Deubiquitinating enzyme 8</fullName>
        <shortName>AtUBP8</shortName>
    </alternativeName>
    <alternativeName>
        <fullName>Ubiquitin thioesterase 8</fullName>
    </alternativeName>
    <alternativeName>
        <fullName>Ubiquitin-specific-processing protease 8</fullName>
    </alternativeName>
</protein>
<keyword id="KW-0378">Hydrolase</keyword>
<keyword id="KW-0645">Protease</keyword>
<keyword id="KW-1185">Reference proteome</keyword>
<keyword id="KW-0788">Thiol protease</keyword>
<keyword id="KW-0833">Ubl conjugation pathway</keyword>
<evidence type="ECO:0000250" key="1"/>
<evidence type="ECO:0000255" key="2">
    <source>
        <dbReference type="PROSITE-ProRule" id="PRU10092"/>
    </source>
</evidence>
<evidence type="ECO:0000255" key="3">
    <source>
        <dbReference type="PROSITE-ProRule" id="PRU10093"/>
    </source>
</evidence>
<evidence type="ECO:0000256" key="4">
    <source>
        <dbReference type="SAM" id="MobiDB-lite"/>
    </source>
</evidence>
<evidence type="ECO:0000305" key="5"/>
<name>UBP8_ARATH</name>
<accession>Q9C585</accession>
<accession>F4K8E0</accession>
<accession>Q0WVQ0</accession>
<accession>Q9FPT2</accession>
<reference key="1">
    <citation type="journal article" date="2000" name="Nature">
        <title>Sequence and analysis of chromosome 5 of the plant Arabidopsis thaliana.</title>
        <authorList>
            <person name="Tabata S."/>
            <person name="Kaneko T."/>
            <person name="Nakamura Y."/>
            <person name="Kotani H."/>
            <person name="Kato T."/>
            <person name="Asamizu E."/>
            <person name="Miyajima N."/>
            <person name="Sasamoto S."/>
            <person name="Kimura T."/>
            <person name="Hosouchi T."/>
            <person name="Kawashima K."/>
            <person name="Kohara M."/>
            <person name="Matsumoto M."/>
            <person name="Matsuno A."/>
            <person name="Muraki A."/>
            <person name="Nakayama S."/>
            <person name="Nakazaki N."/>
            <person name="Naruo K."/>
            <person name="Okumura S."/>
            <person name="Shinpo S."/>
            <person name="Takeuchi C."/>
            <person name="Wada T."/>
            <person name="Watanabe A."/>
            <person name="Yamada M."/>
            <person name="Yasuda M."/>
            <person name="Sato S."/>
            <person name="de la Bastide M."/>
            <person name="Huang E."/>
            <person name="Spiegel L."/>
            <person name="Gnoj L."/>
            <person name="O'Shaughnessy A."/>
            <person name="Preston R."/>
            <person name="Habermann K."/>
            <person name="Murray J."/>
            <person name="Johnson D."/>
            <person name="Rohlfing T."/>
            <person name="Nelson J."/>
            <person name="Stoneking T."/>
            <person name="Pepin K."/>
            <person name="Spieth J."/>
            <person name="Sekhon M."/>
            <person name="Armstrong J."/>
            <person name="Becker M."/>
            <person name="Belter E."/>
            <person name="Cordum H."/>
            <person name="Cordes M."/>
            <person name="Courtney L."/>
            <person name="Courtney W."/>
            <person name="Dante M."/>
            <person name="Du H."/>
            <person name="Edwards J."/>
            <person name="Fryman J."/>
            <person name="Haakensen B."/>
            <person name="Lamar E."/>
            <person name="Latreille P."/>
            <person name="Leonard S."/>
            <person name="Meyer R."/>
            <person name="Mulvaney E."/>
            <person name="Ozersky P."/>
            <person name="Riley A."/>
            <person name="Strowmatt C."/>
            <person name="Wagner-McPherson C."/>
            <person name="Wollam A."/>
            <person name="Yoakum M."/>
            <person name="Bell M."/>
            <person name="Dedhia N."/>
            <person name="Parnell L."/>
            <person name="Shah R."/>
            <person name="Rodriguez M."/>
            <person name="Hoon See L."/>
            <person name="Vil D."/>
            <person name="Baker J."/>
            <person name="Kirchoff K."/>
            <person name="Toth K."/>
            <person name="King L."/>
            <person name="Bahret A."/>
            <person name="Miller B."/>
            <person name="Marra M.A."/>
            <person name="Martienssen R."/>
            <person name="McCombie W.R."/>
            <person name="Wilson R.K."/>
            <person name="Murphy G."/>
            <person name="Bancroft I."/>
            <person name="Volckaert G."/>
            <person name="Wambutt R."/>
            <person name="Duesterhoeft A."/>
            <person name="Stiekema W."/>
            <person name="Pohl T."/>
            <person name="Entian K.-D."/>
            <person name="Terryn N."/>
            <person name="Hartley N."/>
            <person name="Bent E."/>
            <person name="Johnson S."/>
            <person name="Langham S.-A."/>
            <person name="McCullagh B."/>
            <person name="Robben J."/>
            <person name="Grymonprez B."/>
            <person name="Zimmermann W."/>
            <person name="Ramsperger U."/>
            <person name="Wedler H."/>
            <person name="Balke K."/>
            <person name="Wedler E."/>
            <person name="Peters S."/>
            <person name="van Staveren M."/>
            <person name="Dirkse W."/>
            <person name="Mooijman P."/>
            <person name="Klein Lankhorst R."/>
            <person name="Weitzenegger T."/>
            <person name="Bothe G."/>
            <person name="Rose M."/>
            <person name="Hauf J."/>
            <person name="Berneiser S."/>
            <person name="Hempel S."/>
            <person name="Feldpausch M."/>
            <person name="Lamberth S."/>
            <person name="Villarroel R."/>
            <person name="Gielen J."/>
            <person name="Ardiles W."/>
            <person name="Bents O."/>
            <person name="Lemcke K."/>
            <person name="Kolesov G."/>
            <person name="Mayer K.F.X."/>
            <person name="Rudd S."/>
            <person name="Schoof H."/>
            <person name="Schueller C."/>
            <person name="Zaccaria P."/>
            <person name="Mewes H.-W."/>
            <person name="Bevan M."/>
            <person name="Fransz P.F."/>
        </authorList>
    </citation>
    <scope>NUCLEOTIDE SEQUENCE [LARGE SCALE GENOMIC DNA]</scope>
    <source>
        <strain>cv. Columbia</strain>
    </source>
</reference>
<reference key="2">
    <citation type="journal article" date="2017" name="Plant J.">
        <title>Araport11: a complete reannotation of the Arabidopsis thaliana reference genome.</title>
        <authorList>
            <person name="Cheng C.Y."/>
            <person name="Krishnakumar V."/>
            <person name="Chan A.P."/>
            <person name="Thibaud-Nissen F."/>
            <person name="Schobel S."/>
            <person name="Town C.D."/>
        </authorList>
    </citation>
    <scope>GENOME REANNOTATION</scope>
    <source>
        <strain>cv. Columbia</strain>
    </source>
</reference>
<reference key="3">
    <citation type="submission" date="2006-07" db="EMBL/GenBank/DDBJ databases">
        <title>Large-scale analysis of RIKEN Arabidopsis full-length (RAFL) cDNAs.</title>
        <authorList>
            <person name="Totoki Y."/>
            <person name="Seki M."/>
            <person name="Ishida J."/>
            <person name="Nakajima M."/>
            <person name="Enju A."/>
            <person name="Kamiya A."/>
            <person name="Narusaka M."/>
            <person name="Shin-i T."/>
            <person name="Nakagawa M."/>
            <person name="Sakamoto N."/>
            <person name="Oishi K."/>
            <person name="Kohara Y."/>
            <person name="Kobayashi M."/>
            <person name="Toyoda A."/>
            <person name="Sakaki Y."/>
            <person name="Sakurai T."/>
            <person name="Iida K."/>
            <person name="Akiyama K."/>
            <person name="Satou M."/>
            <person name="Toyoda T."/>
            <person name="Konagaya A."/>
            <person name="Carninci P."/>
            <person name="Kawai J."/>
            <person name="Hayashizaki Y."/>
            <person name="Shinozaki K."/>
        </authorList>
    </citation>
    <scope>NUCLEOTIDE SEQUENCE [LARGE SCALE MRNA]</scope>
    <source>
        <strain>cv. Columbia</strain>
    </source>
</reference>
<reference key="4">
    <citation type="journal article" date="2000" name="Plant Physiol.">
        <title>The ubiquitin-specific protease family from Arabidopsis. AtUBP1 and 2 are required for the resistance to the amino acid analog canavanine.</title>
        <authorList>
            <person name="Yan N."/>
            <person name="Doelling J.H."/>
            <person name="Falbel T.G."/>
            <person name="Durski A.M."/>
            <person name="Vierstra R.D."/>
        </authorList>
    </citation>
    <scope>NUCLEOTIDE SEQUENCE [MRNA] OF 402-871</scope>
    <scope>GENE FAMILY ORGANIZATION</scope>
    <scope>NOMENCLATURE</scope>
    <source>
        <strain>cv. Columbia</strain>
    </source>
</reference>
<sequence length="871" mass="98171">MNGTSPDESPDSTTQRIDSFNGEQRVYFVPLRWWKDAQDSMPSESVEKREILYTASCGSSYGGPMKLINNIFNSDILFDLRREGDALQNGETGEASVSGRDFALVSSDMWLQALKWYHDDKNTEKGVKSFSAGGVDRGDVYPVQLRLSVLQETNSLAVKICKKDNSVECFRRACKIFSLDSEQLRIWDISGQTTLFFESDVSNSKDCQQQADQEILLELQIYGLSDSIKLKESKKEDGSTQQTNGITNGMNGGTVFRFGRSNSLSFLGKAGEAGTLGLTGLQNLGNTCFMNSSLQCLAHTPKLVDFFLGEYSKEINLDNPLGMKGEIALAFGDLLRSLWAPGASTVAPRTFKAKLARFAPQFSGFNQHDSQELLAFLLDGLHEDLNRVKNKPYVEAKDGDGRPDAEVADEYWRNHVARNDSIIVDVCQGQYKSTLVCPICKKVSVMFDPFMYLSLPLPCTSMRTMDLTVMSADGSSLPIPLTVNVPKFGKFEDLHKALVTACSLPEEETLLVTEVYNNRIIRFLEEPTDSLTLIRDGDKLVVYRLKKDANNSPLIVYMHQKLEEQFISGKSSPTWKAFGIPLVSRLCDVENGSDVENLYLKLLSSFKMPTEFFTENLENPTEEEATDKTDTDGTTSVEDTNSTDVKETTESLPDPVLRLYLTDDRGNSIEAEMLKEKPVNKSKRLNVLARWPVKELDVYDTCLLSSLPEVSKSGTKRPQESVSLFKCLEAFLTEEPLGPDDMWYCPGCKEHRQAIKKLDLWRLPEILVIHLKRFSYSRFMKNKLEAYVDFPLDNLDLSSYISYKNGQTTYRYMLYAISNHYGSMGGGHYTAYVHHGGDRWYDFDDSHVHQISQEKIKTSAAYVLFYKRLVD</sequence>
<dbReference type="EC" id="3.4.19.12"/>
<dbReference type="EMBL" id="AL589883">
    <property type="protein sequence ID" value="CAC34496.1"/>
    <property type="status" value="ALT_SEQ"/>
    <property type="molecule type" value="Genomic_DNA"/>
</dbReference>
<dbReference type="EMBL" id="CP002688">
    <property type="protein sequence ID" value="AED92970.1"/>
    <property type="status" value="ALT_SEQ"/>
    <property type="molecule type" value="Genomic_DNA"/>
</dbReference>
<dbReference type="EMBL" id="CP002688">
    <property type="protein sequence ID" value="AED92971.2"/>
    <property type="molecule type" value="Genomic_DNA"/>
</dbReference>
<dbReference type="EMBL" id="AK226691">
    <property type="protein sequence ID" value="BAE98798.1"/>
    <property type="status" value="ALT_SEQ"/>
    <property type="molecule type" value="mRNA"/>
</dbReference>
<dbReference type="EMBL" id="AF302662">
    <property type="protein sequence ID" value="AAG42753.1"/>
    <property type="molecule type" value="mRNA"/>
</dbReference>
<dbReference type="RefSeq" id="NP_001318617.1">
    <property type="nucleotide sequence ID" value="NM_001343718.1"/>
</dbReference>
<dbReference type="RefSeq" id="NP_568411.4">
    <property type="nucleotide sequence ID" value="NM_122126.5"/>
</dbReference>
<dbReference type="SMR" id="Q9C585"/>
<dbReference type="FunCoup" id="Q9C585">
    <property type="interactions" value="4023"/>
</dbReference>
<dbReference type="STRING" id="3702.Q9C585"/>
<dbReference type="MEROPS" id="C19.A01"/>
<dbReference type="iPTMnet" id="Q9C585"/>
<dbReference type="PaxDb" id="3702-AT5G22030.1"/>
<dbReference type="ProteomicsDB" id="228476"/>
<dbReference type="EnsemblPlants" id="AT5G22030.1">
    <property type="protein sequence ID" value="AT5G22030.1"/>
    <property type="gene ID" value="AT5G22030"/>
</dbReference>
<dbReference type="GeneID" id="832263"/>
<dbReference type="Gramene" id="AT5G22030.1">
    <property type="protein sequence ID" value="AT5G22030.1"/>
    <property type="gene ID" value="AT5G22030"/>
</dbReference>
<dbReference type="KEGG" id="ath:AT5G22030"/>
<dbReference type="Araport" id="AT5G22030"/>
<dbReference type="TAIR" id="AT5G22030">
    <property type="gene designation" value="UBP8"/>
</dbReference>
<dbReference type="eggNOG" id="KOG1870">
    <property type="taxonomic scope" value="Eukaryota"/>
</dbReference>
<dbReference type="InParanoid" id="Q9C585"/>
<dbReference type="OMA" id="KQQHSPN"/>
<dbReference type="PhylomeDB" id="Q9C585"/>
<dbReference type="PRO" id="PR:Q9C585"/>
<dbReference type="Proteomes" id="UP000006548">
    <property type="component" value="Chromosome 5"/>
</dbReference>
<dbReference type="ExpressionAtlas" id="Q9C585">
    <property type="expression patterns" value="baseline and differential"/>
</dbReference>
<dbReference type="GO" id="GO:0004843">
    <property type="term" value="F:cysteine-type deubiquitinase activity"/>
    <property type="evidence" value="ECO:0007669"/>
    <property type="project" value="UniProtKB-EC"/>
</dbReference>
<dbReference type="GO" id="GO:0016579">
    <property type="term" value="P:protein deubiquitination"/>
    <property type="evidence" value="ECO:0007669"/>
    <property type="project" value="InterPro"/>
</dbReference>
<dbReference type="GO" id="GO:0006508">
    <property type="term" value="P:proteolysis"/>
    <property type="evidence" value="ECO:0007669"/>
    <property type="project" value="UniProtKB-KW"/>
</dbReference>
<dbReference type="CDD" id="cd02674">
    <property type="entry name" value="Peptidase_C19R"/>
    <property type="match status" value="1"/>
</dbReference>
<dbReference type="Gene3D" id="3.90.70.10">
    <property type="entry name" value="Cysteine proteinases"/>
    <property type="match status" value="2"/>
</dbReference>
<dbReference type="Gene3D" id="3.30.2230.10">
    <property type="entry name" value="DUSP-like"/>
    <property type="match status" value="1"/>
</dbReference>
<dbReference type="InterPro" id="IPR035927">
    <property type="entry name" value="DUSP-like_sf"/>
</dbReference>
<dbReference type="InterPro" id="IPR038765">
    <property type="entry name" value="Papain-like_cys_pep_sf"/>
</dbReference>
<dbReference type="InterPro" id="IPR001394">
    <property type="entry name" value="Peptidase_C19_UCH"/>
</dbReference>
<dbReference type="InterPro" id="IPR050185">
    <property type="entry name" value="Ub_carboxyl-term_hydrolase"/>
</dbReference>
<dbReference type="InterPro" id="IPR018200">
    <property type="entry name" value="USP_CS"/>
</dbReference>
<dbReference type="InterPro" id="IPR028889">
    <property type="entry name" value="USP_dom"/>
</dbReference>
<dbReference type="PANTHER" id="PTHR21646">
    <property type="entry name" value="UBIQUITIN CARBOXYL-TERMINAL HYDROLASE"/>
    <property type="match status" value="1"/>
</dbReference>
<dbReference type="PANTHER" id="PTHR21646:SF24">
    <property type="entry name" value="UBIQUITIN CARBOXYL-TERMINAL HYDROLASE"/>
    <property type="match status" value="1"/>
</dbReference>
<dbReference type="Pfam" id="PF25242">
    <property type="entry name" value="Ubiquitin_UBP8"/>
    <property type="match status" value="1"/>
</dbReference>
<dbReference type="Pfam" id="PF00443">
    <property type="entry name" value="UCH"/>
    <property type="match status" value="1"/>
</dbReference>
<dbReference type="SUPFAM" id="SSF54001">
    <property type="entry name" value="Cysteine proteinases"/>
    <property type="match status" value="1"/>
</dbReference>
<dbReference type="PROSITE" id="PS00972">
    <property type="entry name" value="USP_1"/>
    <property type="match status" value="1"/>
</dbReference>
<dbReference type="PROSITE" id="PS00973">
    <property type="entry name" value="USP_2"/>
    <property type="match status" value="1"/>
</dbReference>
<dbReference type="PROSITE" id="PS50235">
    <property type="entry name" value="USP_3"/>
    <property type="match status" value="1"/>
</dbReference>
<organism>
    <name type="scientific">Arabidopsis thaliana</name>
    <name type="common">Mouse-ear cress</name>
    <dbReference type="NCBI Taxonomy" id="3702"/>
    <lineage>
        <taxon>Eukaryota</taxon>
        <taxon>Viridiplantae</taxon>
        <taxon>Streptophyta</taxon>
        <taxon>Embryophyta</taxon>
        <taxon>Tracheophyta</taxon>
        <taxon>Spermatophyta</taxon>
        <taxon>Magnoliopsida</taxon>
        <taxon>eudicotyledons</taxon>
        <taxon>Gunneridae</taxon>
        <taxon>Pentapetalae</taxon>
        <taxon>rosids</taxon>
        <taxon>malvids</taxon>
        <taxon>Brassicales</taxon>
        <taxon>Brassicaceae</taxon>
        <taxon>Camelineae</taxon>
        <taxon>Arabidopsis</taxon>
    </lineage>
</organism>
<feature type="chain" id="PRO_0000313035" description="Ubiquitin carboxyl-terminal hydrolase 8">
    <location>
        <begin position="1"/>
        <end position="871"/>
    </location>
</feature>
<feature type="domain" description="DUSP">
    <location>
        <begin position="4"/>
        <end position="99"/>
    </location>
</feature>
<feature type="domain" description="USP">
    <location>
        <begin position="279"/>
        <end position="869"/>
    </location>
</feature>
<feature type="region of interest" description="Disordered" evidence="4">
    <location>
        <begin position="615"/>
        <end position="650"/>
    </location>
</feature>
<feature type="active site" description="Nucleophile" evidence="2 3">
    <location>
        <position position="288"/>
    </location>
</feature>
<feature type="active site" description="Proton acceptor" evidence="2 3">
    <location>
        <position position="828"/>
    </location>
</feature>
<feature type="sequence conflict" description="In Ref. 4; AAG42753." evidence="5" ref="4">
    <original>N</original>
    <variation>P</variation>
    <location>
        <position position="414"/>
    </location>
</feature>
<feature type="sequence conflict" description="In Ref. 3; BAE98798." evidence="5" ref="3">
    <original>E</original>
    <variation>K</variation>
    <location>
        <position position="618"/>
    </location>
</feature>
<feature type="sequence conflict" description="In Ref. 4; AAG42753." evidence="5" ref="4">
    <original>L</original>
    <variation>F</variation>
    <location>
        <position position="703"/>
    </location>
</feature>